<comment type="function">
    <text evidence="1">Hydrolyzes ribosome-free peptidyl-tRNAs (with 1 or more amino acids incorporated), which drop off the ribosome during protein synthesis, or as a result of ribosome stalling.</text>
</comment>
<comment type="function">
    <text evidence="1">Catalyzes the release of premature peptidyl moieties from peptidyl-tRNA molecules trapped in stalled 50S ribosomal subunits, and thus maintains levels of free tRNAs and 50S ribosomes.</text>
</comment>
<comment type="catalytic activity">
    <reaction evidence="1">
        <text>an N-acyl-L-alpha-aminoacyl-tRNA + H2O = an N-acyl-L-amino acid + a tRNA + H(+)</text>
        <dbReference type="Rhea" id="RHEA:54448"/>
        <dbReference type="Rhea" id="RHEA-COMP:10123"/>
        <dbReference type="Rhea" id="RHEA-COMP:13883"/>
        <dbReference type="ChEBI" id="CHEBI:15377"/>
        <dbReference type="ChEBI" id="CHEBI:15378"/>
        <dbReference type="ChEBI" id="CHEBI:59874"/>
        <dbReference type="ChEBI" id="CHEBI:78442"/>
        <dbReference type="ChEBI" id="CHEBI:138191"/>
        <dbReference type="EC" id="3.1.1.29"/>
    </reaction>
</comment>
<comment type="subunit">
    <text evidence="1">Monomer.</text>
</comment>
<comment type="subcellular location">
    <subcellularLocation>
        <location evidence="1">Cytoplasm</location>
    </subcellularLocation>
</comment>
<comment type="similarity">
    <text evidence="1">Belongs to the PTH family.</text>
</comment>
<sequence>MILIVGLGNPGNEYKNTKHNIGFMLIDELLSSDFSSLKSSKFQGELFKKGEILLLKPQTFMNLSGNSVKAVNDFYKPERIIVIHDDLDLNFGALRFKRGGSSGGHNGIKSIDNLIGNDYERVRIGIGRGQGNAANIVLSKFNNDEDKKLVEILSTAKKAVEFLIKNDINLTSQKFSRKGLKSEILSKNSDDENLNSQNSALKNLIKNVKISQISCSSEKK</sequence>
<accession>A7I2W3</accession>
<gene>
    <name evidence="1" type="primary">pth</name>
    <name type="ordered locus">CHAB381_1303</name>
</gene>
<organism>
    <name type="scientific">Campylobacter hominis (strain ATCC BAA-381 / DSM 21671 / CCUG 45161 / LMG 19568 / NCTC 13146 / CH001A)</name>
    <dbReference type="NCBI Taxonomy" id="360107"/>
    <lineage>
        <taxon>Bacteria</taxon>
        <taxon>Pseudomonadati</taxon>
        <taxon>Campylobacterota</taxon>
        <taxon>Epsilonproteobacteria</taxon>
        <taxon>Campylobacterales</taxon>
        <taxon>Campylobacteraceae</taxon>
        <taxon>Campylobacter</taxon>
    </lineage>
</organism>
<protein>
    <recommendedName>
        <fullName evidence="1">Peptidyl-tRNA hydrolase</fullName>
        <shortName evidence="1">Pth</shortName>
        <ecNumber evidence="1">3.1.1.29</ecNumber>
    </recommendedName>
</protein>
<dbReference type="EC" id="3.1.1.29" evidence="1"/>
<dbReference type="EMBL" id="CP000776">
    <property type="protein sequence ID" value="ABS51477.1"/>
    <property type="molecule type" value="Genomic_DNA"/>
</dbReference>
<dbReference type="SMR" id="A7I2W3"/>
<dbReference type="STRING" id="360107.CHAB381_1303"/>
<dbReference type="KEGG" id="cha:CHAB381_1303"/>
<dbReference type="eggNOG" id="COG0193">
    <property type="taxonomic scope" value="Bacteria"/>
</dbReference>
<dbReference type="HOGENOM" id="CLU_062456_4_1_7"/>
<dbReference type="OrthoDB" id="9800507at2"/>
<dbReference type="Proteomes" id="UP000002407">
    <property type="component" value="Chromosome"/>
</dbReference>
<dbReference type="GO" id="GO:0005737">
    <property type="term" value="C:cytoplasm"/>
    <property type="evidence" value="ECO:0007669"/>
    <property type="project" value="UniProtKB-SubCell"/>
</dbReference>
<dbReference type="GO" id="GO:0004045">
    <property type="term" value="F:peptidyl-tRNA hydrolase activity"/>
    <property type="evidence" value="ECO:0007669"/>
    <property type="project" value="UniProtKB-UniRule"/>
</dbReference>
<dbReference type="GO" id="GO:0000049">
    <property type="term" value="F:tRNA binding"/>
    <property type="evidence" value="ECO:0007669"/>
    <property type="project" value="UniProtKB-UniRule"/>
</dbReference>
<dbReference type="GO" id="GO:0006515">
    <property type="term" value="P:protein quality control for misfolded or incompletely synthesized proteins"/>
    <property type="evidence" value="ECO:0007669"/>
    <property type="project" value="UniProtKB-UniRule"/>
</dbReference>
<dbReference type="GO" id="GO:0072344">
    <property type="term" value="P:rescue of stalled ribosome"/>
    <property type="evidence" value="ECO:0007669"/>
    <property type="project" value="UniProtKB-UniRule"/>
</dbReference>
<dbReference type="CDD" id="cd00462">
    <property type="entry name" value="PTH"/>
    <property type="match status" value="1"/>
</dbReference>
<dbReference type="FunFam" id="3.40.50.1470:FF:000001">
    <property type="entry name" value="Peptidyl-tRNA hydrolase"/>
    <property type="match status" value="1"/>
</dbReference>
<dbReference type="Gene3D" id="3.40.50.1470">
    <property type="entry name" value="Peptidyl-tRNA hydrolase"/>
    <property type="match status" value="1"/>
</dbReference>
<dbReference type="HAMAP" id="MF_00083">
    <property type="entry name" value="Pept_tRNA_hydro_bact"/>
    <property type="match status" value="1"/>
</dbReference>
<dbReference type="InterPro" id="IPR001328">
    <property type="entry name" value="Pept_tRNA_hydro"/>
</dbReference>
<dbReference type="InterPro" id="IPR018171">
    <property type="entry name" value="Pept_tRNA_hydro_CS"/>
</dbReference>
<dbReference type="InterPro" id="IPR036416">
    <property type="entry name" value="Pept_tRNA_hydro_sf"/>
</dbReference>
<dbReference type="NCBIfam" id="TIGR00447">
    <property type="entry name" value="pth"/>
    <property type="match status" value="1"/>
</dbReference>
<dbReference type="PANTHER" id="PTHR17224">
    <property type="entry name" value="PEPTIDYL-TRNA HYDROLASE"/>
    <property type="match status" value="1"/>
</dbReference>
<dbReference type="PANTHER" id="PTHR17224:SF1">
    <property type="entry name" value="PEPTIDYL-TRNA HYDROLASE"/>
    <property type="match status" value="1"/>
</dbReference>
<dbReference type="Pfam" id="PF01195">
    <property type="entry name" value="Pept_tRNA_hydro"/>
    <property type="match status" value="1"/>
</dbReference>
<dbReference type="SUPFAM" id="SSF53178">
    <property type="entry name" value="Peptidyl-tRNA hydrolase-like"/>
    <property type="match status" value="1"/>
</dbReference>
<dbReference type="PROSITE" id="PS01195">
    <property type="entry name" value="PEPT_TRNA_HYDROL_1"/>
    <property type="match status" value="1"/>
</dbReference>
<dbReference type="PROSITE" id="PS01196">
    <property type="entry name" value="PEPT_TRNA_HYDROL_2"/>
    <property type="match status" value="1"/>
</dbReference>
<proteinExistence type="inferred from homology"/>
<feature type="chain" id="PRO_1000010578" description="Peptidyl-tRNA hydrolase">
    <location>
        <begin position="1"/>
        <end position="220"/>
    </location>
</feature>
<feature type="active site" description="Proton acceptor" evidence="1">
    <location>
        <position position="19"/>
    </location>
</feature>
<feature type="binding site" evidence="1">
    <location>
        <position position="14"/>
    </location>
    <ligand>
        <name>tRNA</name>
        <dbReference type="ChEBI" id="CHEBI:17843"/>
    </ligand>
</feature>
<feature type="binding site" evidence="1">
    <location>
        <position position="60"/>
    </location>
    <ligand>
        <name>tRNA</name>
        <dbReference type="ChEBI" id="CHEBI:17843"/>
    </ligand>
</feature>
<feature type="binding site" evidence="1">
    <location>
        <position position="62"/>
    </location>
    <ligand>
        <name>tRNA</name>
        <dbReference type="ChEBI" id="CHEBI:17843"/>
    </ligand>
</feature>
<feature type="binding site" evidence="1">
    <location>
        <position position="106"/>
    </location>
    <ligand>
        <name>tRNA</name>
        <dbReference type="ChEBI" id="CHEBI:17843"/>
    </ligand>
</feature>
<feature type="site" description="Discriminates between blocked and unblocked aminoacyl-tRNA" evidence="1">
    <location>
        <position position="9"/>
    </location>
</feature>
<feature type="site" description="Stabilizes the basic form of H active site to accept a proton" evidence="1">
    <location>
        <position position="85"/>
    </location>
</feature>
<evidence type="ECO:0000255" key="1">
    <source>
        <dbReference type="HAMAP-Rule" id="MF_00083"/>
    </source>
</evidence>
<keyword id="KW-0963">Cytoplasm</keyword>
<keyword id="KW-0378">Hydrolase</keyword>
<keyword id="KW-1185">Reference proteome</keyword>
<keyword id="KW-0694">RNA-binding</keyword>
<keyword id="KW-0820">tRNA-binding</keyword>
<name>PTH_CAMHC</name>
<reference key="1">
    <citation type="submission" date="2007-07" db="EMBL/GenBank/DDBJ databases">
        <title>Complete genome sequence of Campylobacter hominis ATCC BAA-381, a commensal isolated from the human gastrointestinal tract.</title>
        <authorList>
            <person name="Fouts D.E."/>
            <person name="Mongodin E.F."/>
            <person name="Puiu D."/>
            <person name="Sebastian Y."/>
            <person name="Miller W.G."/>
            <person name="Mandrell R.E."/>
            <person name="Nelson K.E."/>
        </authorList>
    </citation>
    <scope>NUCLEOTIDE SEQUENCE [LARGE SCALE GENOMIC DNA]</scope>
    <source>
        <strain>ATCC BAA-381 / DSM 21671 / CCUG 45161 / LMG 19568 / NCTC 13146 / CH001A</strain>
    </source>
</reference>